<organism>
    <name type="scientific">Vanderwaltozyma polyspora (strain ATCC 22028 / DSM 70294 / BCRC 21397 / CBS 2163 / NBRC 10782 / NRRL Y-8283 / UCD 57-17)</name>
    <name type="common">Kluyveromyces polysporus</name>
    <dbReference type="NCBI Taxonomy" id="436907"/>
    <lineage>
        <taxon>Eukaryota</taxon>
        <taxon>Fungi</taxon>
        <taxon>Dikarya</taxon>
        <taxon>Ascomycota</taxon>
        <taxon>Saccharomycotina</taxon>
        <taxon>Saccharomycetes</taxon>
        <taxon>Saccharomycetales</taxon>
        <taxon>Saccharomycetaceae</taxon>
        <taxon>Vanderwaltozyma</taxon>
    </lineage>
</organism>
<reference key="1">
    <citation type="journal article" date="2007" name="Proc. Natl. Acad. Sci. U.S.A.">
        <title>Independent sorting-out of thousands of duplicated gene pairs in two yeast species descended from a whole-genome duplication.</title>
        <authorList>
            <person name="Scannell D.R."/>
            <person name="Frank A.C."/>
            <person name="Conant G.C."/>
            <person name="Byrne K.P."/>
            <person name="Woolfit M."/>
            <person name="Wolfe K.H."/>
        </authorList>
    </citation>
    <scope>NUCLEOTIDE SEQUENCE [LARGE SCALE GENOMIC DNA]</scope>
    <source>
        <strain>ATCC 22028 / DSM 70294 / BCRC 21397 / CBS 2163 / NBRC 10782 / NRRL Y-8283 / UCD 57-17</strain>
    </source>
</reference>
<accession>A7TS55</accession>
<feature type="chain" id="PRO_0000343032" description="Golgi apparatus membrane protein TVP18">
    <location>
        <begin position="1"/>
        <end position="168"/>
    </location>
</feature>
<feature type="transmembrane region" description="Helical" evidence="2">
    <location>
        <begin position="29"/>
        <end position="49"/>
    </location>
</feature>
<feature type="transmembrane region" description="Helical" evidence="2">
    <location>
        <begin position="51"/>
        <end position="71"/>
    </location>
</feature>
<feature type="transmembrane region" description="Helical" evidence="2">
    <location>
        <begin position="95"/>
        <end position="112"/>
    </location>
</feature>
<feature type="transmembrane region" description="Helical" evidence="2">
    <location>
        <begin position="116"/>
        <end position="138"/>
    </location>
</feature>
<feature type="glycosylation site" description="N-linked (GlcNAc...) asparagine" evidence="2">
    <location>
        <position position="22"/>
    </location>
</feature>
<protein>
    <recommendedName>
        <fullName>Golgi apparatus membrane protein TVP18</fullName>
    </recommendedName>
</protein>
<evidence type="ECO:0000250" key="1"/>
<evidence type="ECO:0000255" key="2"/>
<evidence type="ECO:0000305" key="3"/>
<comment type="function">
    <text evidence="1">Golgi membrane protein involved in vesicular trafficking.</text>
</comment>
<comment type="subcellular location">
    <subcellularLocation>
        <location evidence="1">Golgi apparatus membrane</location>
        <topology evidence="1">Multi-pass membrane protein</topology>
    </subcellularLocation>
</comment>
<comment type="similarity">
    <text evidence="3">Belongs to the TVP18 family.</text>
</comment>
<comment type="sequence caution" evidence="3">
    <conflict type="erroneous gene model prediction">
        <sequence resource="EMBL-CDS" id="EDO14905"/>
    </conflict>
</comment>
<dbReference type="EMBL" id="DS480499">
    <property type="protein sequence ID" value="EDO14905.1"/>
    <property type="status" value="ALT_SEQ"/>
    <property type="molecule type" value="Genomic_DNA"/>
</dbReference>
<dbReference type="RefSeq" id="XP_001642763.1">
    <property type="nucleotide sequence ID" value="XM_001642713.1"/>
</dbReference>
<dbReference type="FunCoup" id="A7TS55">
    <property type="interactions" value="66"/>
</dbReference>
<dbReference type="STRING" id="436907.A7TS55"/>
<dbReference type="GlyCosmos" id="A7TS55">
    <property type="glycosylation" value="1 site, No reported glycans"/>
</dbReference>
<dbReference type="GeneID" id="5542940"/>
<dbReference type="KEGG" id="vpo:Kpol_348p9"/>
<dbReference type="eggNOG" id="ENOG502S3AC">
    <property type="taxonomic scope" value="Eukaryota"/>
</dbReference>
<dbReference type="HOGENOM" id="CLU_118698_1_0_1"/>
<dbReference type="InParanoid" id="A7TS55"/>
<dbReference type="OrthoDB" id="5591789at2759"/>
<dbReference type="Proteomes" id="UP000000267">
    <property type="component" value="Unassembled WGS sequence"/>
</dbReference>
<dbReference type="GO" id="GO:0000139">
    <property type="term" value="C:Golgi membrane"/>
    <property type="evidence" value="ECO:0007669"/>
    <property type="project" value="UniProtKB-SubCell"/>
</dbReference>
<dbReference type="GO" id="GO:0016192">
    <property type="term" value="P:vesicle-mediated transport"/>
    <property type="evidence" value="ECO:0007669"/>
    <property type="project" value="TreeGrafter"/>
</dbReference>
<dbReference type="InterPro" id="IPR019365">
    <property type="entry name" value="TVP18/Ca-channel_flower"/>
</dbReference>
<dbReference type="PANTHER" id="PTHR13314">
    <property type="entry name" value="CALCIUM CHANNEL FLOWER HOMOLOG"/>
    <property type="match status" value="1"/>
</dbReference>
<dbReference type="PANTHER" id="PTHR13314:SF2">
    <property type="entry name" value="CALCIUM CHANNEL FLOWER HOMOLOG"/>
    <property type="match status" value="1"/>
</dbReference>
<dbReference type="Pfam" id="PF10233">
    <property type="entry name" value="Cg6151-P"/>
    <property type="match status" value="1"/>
</dbReference>
<dbReference type="SMART" id="SM01077">
    <property type="entry name" value="Cg6151-P"/>
    <property type="match status" value="1"/>
</dbReference>
<proteinExistence type="inferred from homology"/>
<name>TVP18_VANPO</name>
<sequence>MALSIKQFVNFAGFVKDLKSFNFSVYAQYFGYINIIVCMALGIANLFHVNAVIAFGIVAIVQSLIILFVEVPFLLKICPLSENFINFIKNFETNGYRCIFYTLMAIVQWCSLALMVTSLIVVAICLTISAIFYAIAYFKNQEFQHTTNVIKNPTDDDFPHDAVVREML</sequence>
<gene>
    <name type="primary">TVP18</name>
    <name type="ORF">Kpol_348p9</name>
</gene>
<keyword id="KW-0325">Glycoprotein</keyword>
<keyword id="KW-0333">Golgi apparatus</keyword>
<keyword id="KW-0472">Membrane</keyword>
<keyword id="KW-1185">Reference proteome</keyword>
<keyword id="KW-0812">Transmembrane</keyword>
<keyword id="KW-1133">Transmembrane helix</keyword>